<dbReference type="EC" id="4.1.1.31" evidence="1"/>
<dbReference type="EMBL" id="AM774415">
    <property type="protein sequence ID" value="CAP14678.1"/>
    <property type="molecule type" value="Genomic_DNA"/>
</dbReference>
<dbReference type="RefSeq" id="WP_010903679.1">
    <property type="nucleotide sequence ID" value="NC_010364.1"/>
</dbReference>
<dbReference type="SMR" id="B0R7F9"/>
<dbReference type="EnsemblBacteria" id="CAP14678">
    <property type="protein sequence ID" value="CAP14678"/>
    <property type="gene ID" value="OE_4169F"/>
</dbReference>
<dbReference type="GeneID" id="89350400"/>
<dbReference type="KEGG" id="hsl:OE_4169F"/>
<dbReference type="HOGENOM" id="CLU_517433_0_0_2"/>
<dbReference type="PhylomeDB" id="B0R7F9"/>
<dbReference type="Proteomes" id="UP000001321">
    <property type="component" value="Chromosome"/>
</dbReference>
<dbReference type="GO" id="GO:0000287">
    <property type="term" value="F:magnesium ion binding"/>
    <property type="evidence" value="ECO:0007669"/>
    <property type="project" value="UniProtKB-UniRule"/>
</dbReference>
<dbReference type="GO" id="GO:0008964">
    <property type="term" value="F:phosphoenolpyruvate carboxylase activity"/>
    <property type="evidence" value="ECO:0007669"/>
    <property type="project" value="UniProtKB-UniRule"/>
</dbReference>
<dbReference type="GO" id="GO:0015977">
    <property type="term" value="P:carbon fixation"/>
    <property type="evidence" value="ECO:0007669"/>
    <property type="project" value="UniProtKB-UniRule"/>
</dbReference>
<dbReference type="GO" id="GO:0006107">
    <property type="term" value="P:oxaloacetate metabolic process"/>
    <property type="evidence" value="ECO:0007669"/>
    <property type="project" value="UniProtKB-UniRule"/>
</dbReference>
<dbReference type="GO" id="GO:0006099">
    <property type="term" value="P:tricarboxylic acid cycle"/>
    <property type="evidence" value="ECO:0007669"/>
    <property type="project" value="InterPro"/>
</dbReference>
<dbReference type="HAMAP" id="MF_01904">
    <property type="entry name" value="PEPcase_type2"/>
    <property type="match status" value="1"/>
</dbReference>
<dbReference type="InterPro" id="IPR007566">
    <property type="entry name" value="PEP_COase_arc-type"/>
</dbReference>
<dbReference type="InterPro" id="IPR015813">
    <property type="entry name" value="Pyrv/PenolPyrv_kinase-like_dom"/>
</dbReference>
<dbReference type="NCBIfam" id="TIGR02751">
    <property type="entry name" value="PEPCase_arch"/>
    <property type="match status" value="1"/>
</dbReference>
<dbReference type="Pfam" id="PF14010">
    <property type="entry name" value="PEPcase_2"/>
    <property type="match status" value="1"/>
</dbReference>
<dbReference type="PIRSF" id="PIRSF006677">
    <property type="entry name" value="UCP006677"/>
    <property type="match status" value="1"/>
</dbReference>
<dbReference type="SUPFAM" id="SSF51621">
    <property type="entry name" value="Phosphoenolpyruvate/pyruvate domain"/>
    <property type="match status" value="1"/>
</dbReference>
<evidence type="ECO:0000255" key="1">
    <source>
        <dbReference type="HAMAP-Rule" id="MF_01904"/>
    </source>
</evidence>
<comment type="function">
    <text evidence="1">Catalyzes the irreversible beta-carboxylation of phosphoenolpyruvate (PEP) to form oxaloacetate (OAA), a four-carbon dicarboxylic acid source for the tricarboxylic acid cycle.</text>
</comment>
<comment type="catalytic activity">
    <reaction evidence="1">
        <text>oxaloacetate + phosphate = phosphoenolpyruvate + hydrogencarbonate</text>
        <dbReference type="Rhea" id="RHEA:28370"/>
        <dbReference type="ChEBI" id="CHEBI:16452"/>
        <dbReference type="ChEBI" id="CHEBI:17544"/>
        <dbReference type="ChEBI" id="CHEBI:43474"/>
        <dbReference type="ChEBI" id="CHEBI:58702"/>
        <dbReference type="EC" id="4.1.1.31"/>
    </reaction>
</comment>
<comment type="cofactor">
    <cofactor evidence="1">
        <name>Mg(2+)</name>
        <dbReference type="ChEBI" id="CHEBI:18420"/>
    </cofactor>
</comment>
<comment type="subunit">
    <text evidence="1">Homotetramer.</text>
</comment>
<comment type="similarity">
    <text evidence="1">Belongs to the PEPCase type 2 family.</text>
</comment>
<name>CAPPA_HALS3</name>
<accession>B0R7F9</accession>
<sequence length="492" mass="54179">MVDVPRLMSTQHPDNATLPFFTAGDVIEGEDEIQEAYYVYSHLGCDEQMWDFEGKEGDEYAVKKLLSRYDEFFADHQLGTDVRLTVRGPNPDVEGSEAKILLEILESIPRSFDAARRFAGEYGLETTAPIFEVIVPMVTDADQLNAVHEYYERFVTGKADEAVWDGRTVEEWVGEFDPASITVIPLIEEREAMLAADDIVREYATAHDQDAVRVFLARSDPALNYGCLAADLINKVALQRLYEMSEATGVDVHPILGAGSAPFRGNLTPERAAATADAYSEVETFTVQSAFKYDYPVETVRDGVATLRDADLGAPPFPIDEARALAVIDRTADAYADQVDAIAGTVNRLSSYVPDRRARKLHVGLFGYAREVGENALPRAIGYTASLYAVGCPPTLLGAHALTDDDAAFVREAFPAYFDHLADAARYFNPRCTDVLDLDDDTLAAAVERVDVTPNSEHRAATDDAIDALQRGDDDALRSAIRRGARERQFLG</sequence>
<protein>
    <recommendedName>
        <fullName evidence="1">Phosphoenolpyruvate carboxylase</fullName>
        <shortName evidence="1">PEPC</shortName>
        <shortName evidence="1">PEPCase</shortName>
        <ecNumber evidence="1">4.1.1.31</ecNumber>
    </recommendedName>
</protein>
<feature type="chain" id="PRO_1000188767" description="Phosphoenolpyruvate carboxylase">
    <location>
        <begin position="1"/>
        <end position="492"/>
    </location>
</feature>
<keyword id="KW-0120">Carbon dioxide fixation</keyword>
<keyword id="KW-0456">Lyase</keyword>
<keyword id="KW-0460">Magnesium</keyword>
<gene>
    <name evidence="1" type="primary">ppcA</name>
    <name type="ordered locus">OE_4169F</name>
</gene>
<organism>
    <name type="scientific">Halobacterium salinarum (strain ATCC 29341 / DSM 671 / R1)</name>
    <dbReference type="NCBI Taxonomy" id="478009"/>
    <lineage>
        <taxon>Archaea</taxon>
        <taxon>Methanobacteriati</taxon>
        <taxon>Methanobacteriota</taxon>
        <taxon>Stenosarchaea group</taxon>
        <taxon>Halobacteria</taxon>
        <taxon>Halobacteriales</taxon>
        <taxon>Halobacteriaceae</taxon>
        <taxon>Halobacterium</taxon>
        <taxon>Halobacterium salinarum NRC-34001</taxon>
    </lineage>
</organism>
<proteinExistence type="inferred from homology"/>
<reference key="1">
    <citation type="journal article" date="2008" name="Genomics">
        <title>Evolution in the laboratory: the genome of Halobacterium salinarum strain R1 compared to that of strain NRC-1.</title>
        <authorList>
            <person name="Pfeiffer F."/>
            <person name="Schuster S.C."/>
            <person name="Broicher A."/>
            <person name="Falb M."/>
            <person name="Palm P."/>
            <person name="Rodewald K."/>
            <person name="Ruepp A."/>
            <person name="Soppa J."/>
            <person name="Tittor J."/>
            <person name="Oesterhelt D."/>
        </authorList>
    </citation>
    <scope>NUCLEOTIDE SEQUENCE [LARGE SCALE GENOMIC DNA]</scope>
    <source>
        <strain>ATCC 29341 / DSM 671 / R1</strain>
    </source>
</reference>